<feature type="chain" id="PRO_0000068546" description="Aminoglycoside N(3)-acetyltransferase III">
    <location>
        <begin position="1"/>
        <end position="271"/>
    </location>
</feature>
<feature type="binding site" evidence="2 6 7 8">
    <location>
        <position position="31"/>
    </location>
    <ligand>
        <name>CoA</name>
        <dbReference type="ChEBI" id="CHEBI:57287"/>
    </ligand>
</feature>
<feature type="binding site" evidence="2 6 7 8">
    <location>
        <position position="32"/>
    </location>
    <ligand>
        <name>CoA</name>
        <dbReference type="ChEBI" id="CHEBI:57287"/>
    </ligand>
</feature>
<feature type="binding site" evidence="2 6 7 8">
    <location>
        <position position="33"/>
    </location>
    <ligand>
        <name>CoA</name>
        <dbReference type="ChEBI" id="CHEBI:57287"/>
    </ligand>
</feature>
<feature type="binding site" evidence="2 6 7 8">
    <location>
        <position position="34"/>
    </location>
    <ligand>
        <name>CoA</name>
        <dbReference type="ChEBI" id="CHEBI:57287"/>
    </ligand>
</feature>
<feature type="binding site" evidence="2 6 7 8">
    <location>
        <position position="35"/>
    </location>
    <ligand>
        <name>CoA</name>
        <dbReference type="ChEBI" id="CHEBI:57287"/>
    </ligand>
</feature>
<feature type="binding site" evidence="2 6 7 8">
    <location>
        <position position="64"/>
    </location>
    <ligand>
        <name>a 2-deoxystreptamine antibiotic</name>
        <dbReference type="ChEBI" id="CHEBI:77452"/>
    </ligand>
</feature>
<feature type="binding site" evidence="2 6 8">
    <location>
        <position position="72"/>
    </location>
    <ligand>
        <name>a 2-deoxystreptamine antibiotic</name>
        <dbReference type="ChEBI" id="CHEBI:77452"/>
    </ligand>
</feature>
<feature type="binding site" evidence="2 7 8">
    <location>
        <position position="102"/>
    </location>
    <ligand>
        <name>a 2-deoxystreptamine antibiotic</name>
        <dbReference type="ChEBI" id="CHEBI:77452"/>
    </ligand>
</feature>
<feature type="binding site" evidence="2 6 7 8">
    <location>
        <position position="104"/>
    </location>
    <ligand>
        <name>CoA</name>
        <dbReference type="ChEBI" id="CHEBI:57287"/>
    </ligand>
</feature>
<feature type="binding site" evidence="2 6 7 8">
    <location>
        <position position="105"/>
    </location>
    <ligand>
        <name>CoA</name>
        <dbReference type="ChEBI" id="CHEBI:57287"/>
    </ligand>
</feature>
<feature type="binding site" evidence="2 6 7 8">
    <location>
        <position position="109"/>
    </location>
    <ligand>
        <name>CoA</name>
        <dbReference type="ChEBI" id="CHEBI:57287"/>
    </ligand>
</feature>
<feature type="binding site" evidence="2 6 7 8">
    <location>
        <position position="123"/>
    </location>
    <ligand>
        <name>a 2-deoxystreptamine antibiotic</name>
        <dbReference type="ChEBI" id="CHEBI:77452"/>
    </ligand>
</feature>
<feature type="binding site" evidence="2 6 7 8">
    <location>
        <position position="146"/>
    </location>
    <ligand>
        <name>a 2-deoxystreptamine antibiotic</name>
        <dbReference type="ChEBI" id="CHEBI:77452"/>
    </ligand>
</feature>
<feature type="binding site" evidence="2 7 8">
    <location>
        <position position="170"/>
    </location>
    <ligand>
        <name>a 2-deoxystreptamine antibiotic</name>
        <dbReference type="ChEBI" id="CHEBI:77452"/>
    </ligand>
</feature>
<feature type="binding site" evidence="2 6 8">
    <location>
        <position position="171"/>
    </location>
    <ligand>
        <name>CoA</name>
        <dbReference type="ChEBI" id="CHEBI:57287"/>
    </ligand>
</feature>
<feature type="binding site" evidence="2 6 7 8">
    <location>
        <position position="173"/>
    </location>
    <ligand>
        <name>CoA</name>
        <dbReference type="ChEBI" id="CHEBI:57287"/>
    </ligand>
</feature>
<feature type="binding site" evidence="2 6 7 8">
    <location>
        <position position="176"/>
    </location>
    <ligand>
        <name>a 2-deoxystreptamine antibiotic</name>
        <dbReference type="ChEBI" id="CHEBI:77452"/>
    </ligand>
</feature>
<feature type="binding site" evidence="2 6 7 8">
    <location>
        <position position="212"/>
    </location>
    <ligand>
        <name>a 2-deoxystreptamine antibiotic</name>
        <dbReference type="ChEBI" id="CHEBI:77452"/>
    </ligand>
</feature>
<feature type="binding site" evidence="2 7">
    <location>
        <position position="213"/>
    </location>
    <ligand>
        <name>a 2-deoxystreptamine antibiotic</name>
        <dbReference type="ChEBI" id="CHEBI:77452"/>
    </ligand>
</feature>
<feature type="binding site" evidence="2 6 7 8">
    <location>
        <position position="221"/>
    </location>
    <ligand>
        <name>a 2-deoxystreptamine antibiotic</name>
        <dbReference type="ChEBI" id="CHEBI:77452"/>
    </ligand>
</feature>
<feature type="mutagenesis site" description="No effect in catalytic activity with gentamicin as substrate." evidence="2">
    <original>Y</original>
    <variation>F</variation>
    <location>
        <position position="64"/>
    </location>
</feature>
<feature type="mutagenesis site" description="No effect in catalytic activity with gentamicin as substrate." evidence="2">
    <original>D</original>
    <variation>W</variation>
    <location>
        <position position="72"/>
    </location>
</feature>
<feature type="mutagenesis site" description="Loss of catalytic activity with gentamicin as substrate." evidence="2">
    <original>E</original>
    <variation>F</variation>
    <location>
        <position position="123"/>
    </location>
</feature>
<feature type="mutagenesis site" description="No effect in catalytic activity with gentamicin as substrate." evidence="2">
    <original>Y</original>
    <variation>F</variation>
    <location>
        <position position="146"/>
    </location>
</feature>
<feature type="mutagenesis site" description="No effect in catalytic activity with gentamicin as substrate." evidence="2">
    <original>D</original>
    <variation>F</variation>
    <location>
        <position position="170"/>
    </location>
</feature>
<feature type="helix" evidence="11">
    <location>
        <begin position="10"/>
        <end position="20"/>
    </location>
</feature>
<feature type="strand" evidence="11">
    <location>
        <begin position="27"/>
        <end position="32"/>
    </location>
</feature>
<feature type="helix" evidence="11">
    <location>
        <begin position="34"/>
        <end position="37"/>
    </location>
</feature>
<feature type="helix" evidence="11">
    <location>
        <begin position="44"/>
        <end position="55"/>
    </location>
</feature>
<feature type="turn" evidence="9">
    <location>
        <begin position="56"/>
        <end position="58"/>
    </location>
</feature>
<feature type="strand" evidence="11">
    <location>
        <begin position="59"/>
        <end position="64"/>
    </location>
</feature>
<feature type="helix" evidence="11">
    <location>
        <begin position="74"/>
        <end position="76"/>
    </location>
</feature>
<feature type="helix" evidence="11">
    <location>
        <begin position="79"/>
        <end position="88"/>
    </location>
</feature>
<feature type="turn" evidence="11">
    <location>
        <begin position="94"/>
        <end position="96"/>
    </location>
</feature>
<feature type="helix" evidence="11">
    <location>
        <begin position="101"/>
        <end position="103"/>
    </location>
</feature>
<feature type="helix" evidence="11">
    <location>
        <begin position="105"/>
        <end position="111"/>
    </location>
</feature>
<feature type="turn" evidence="10">
    <location>
        <begin position="122"/>
        <end position="124"/>
    </location>
</feature>
<feature type="strand" evidence="11">
    <location>
        <begin position="126"/>
        <end position="130"/>
    </location>
</feature>
<feature type="helix" evidence="11">
    <location>
        <begin position="133"/>
        <end position="137"/>
    </location>
</feature>
<feature type="strand" evidence="11">
    <location>
        <begin position="142"/>
        <end position="144"/>
    </location>
</feature>
<feature type="helix" evidence="11">
    <location>
        <begin position="151"/>
        <end position="157"/>
    </location>
</feature>
<feature type="strand" evidence="11">
    <location>
        <begin position="161"/>
        <end position="166"/>
    </location>
</feature>
<feature type="helix" evidence="11">
    <location>
        <begin position="169"/>
        <end position="171"/>
    </location>
</feature>
<feature type="helix" evidence="11">
    <location>
        <begin position="174"/>
        <end position="181"/>
    </location>
</feature>
<feature type="strand" evidence="11">
    <location>
        <begin position="185"/>
        <end position="198"/>
    </location>
</feature>
<feature type="strand" evidence="11">
    <location>
        <begin position="201"/>
        <end position="210"/>
    </location>
</feature>
<feature type="strand" evidence="10">
    <location>
        <begin position="212"/>
        <end position="214"/>
    </location>
</feature>
<feature type="strand" evidence="11">
    <location>
        <begin position="216"/>
        <end position="218"/>
    </location>
</feature>
<feature type="helix" evidence="11">
    <location>
        <begin position="221"/>
        <end position="230"/>
    </location>
</feature>
<feature type="strand" evidence="11">
    <location>
        <begin position="234"/>
        <end position="239"/>
    </location>
</feature>
<feature type="strand" evidence="11">
    <location>
        <begin position="242"/>
        <end position="248"/>
    </location>
</feature>
<feature type="helix" evidence="11">
    <location>
        <begin position="249"/>
        <end position="264"/>
    </location>
</feature>
<dbReference type="EC" id="2.3.1.81" evidence="1 2"/>
<dbReference type="EMBL" id="X55652">
    <property type="protein sequence ID" value="CAA39184.1"/>
    <property type="molecule type" value="Genomic_DNA"/>
</dbReference>
<dbReference type="PIR" id="S18730">
    <property type="entry name" value="S18730"/>
</dbReference>
<dbReference type="RefSeq" id="WP_063840261.1">
    <property type="nucleotide sequence ID" value="NG_047241.1"/>
</dbReference>
<dbReference type="PDB" id="7MQK">
    <property type="method" value="X-ray"/>
    <property type="resolution" value="1.60 A"/>
    <property type="chains" value="A/B/C/D=1-271"/>
</dbReference>
<dbReference type="PDB" id="7MQL">
    <property type="method" value="X-ray"/>
    <property type="resolution" value="1.60 A"/>
    <property type="chains" value="A/B/C/D=1-271"/>
</dbReference>
<dbReference type="PDB" id="7MQM">
    <property type="method" value="X-ray"/>
    <property type="resolution" value="1.60 A"/>
    <property type="chains" value="A/B/C/D=1-271"/>
</dbReference>
<dbReference type="PDB" id="7Q0Q">
    <property type="method" value="X-ray"/>
    <property type="resolution" value="1.96 A"/>
    <property type="chains" value="A/B=1-269"/>
</dbReference>
<dbReference type="PDB" id="7Q10">
    <property type="method" value="X-ray"/>
    <property type="resolution" value="1.82 A"/>
    <property type="chains" value="A/B=1-269"/>
</dbReference>
<dbReference type="PDB" id="7Q1D">
    <property type="method" value="X-ray"/>
    <property type="resolution" value="1.43 A"/>
    <property type="chains" value="A/B/C/D=1-271"/>
</dbReference>
<dbReference type="PDB" id="7Q1X">
    <property type="method" value="X-ray"/>
    <property type="resolution" value="1.45 A"/>
    <property type="chains" value="A/B=1-271"/>
</dbReference>
<dbReference type="PDBsum" id="7MQK"/>
<dbReference type="PDBsum" id="7MQL"/>
<dbReference type="PDBsum" id="7MQM"/>
<dbReference type="PDBsum" id="7Q0Q"/>
<dbReference type="PDBsum" id="7Q10"/>
<dbReference type="PDBsum" id="7Q1D"/>
<dbReference type="PDBsum" id="7Q1X"/>
<dbReference type="SMR" id="P29808"/>
<dbReference type="CARD" id="ARO:3002536">
    <property type="molecule name" value="AAC(3)-IIIa"/>
    <property type="mechanism identifier" value="ARO:0001004"/>
    <property type="mechanism name" value="antibiotic inactivation"/>
</dbReference>
<dbReference type="KEGG" id="ag:CAA39184"/>
<dbReference type="GO" id="GO:0046353">
    <property type="term" value="F:aminoglycoside 3-N-acetyltransferase activity"/>
    <property type="evidence" value="ECO:0000314"/>
    <property type="project" value="UniProtKB"/>
</dbReference>
<dbReference type="GO" id="GO:0120225">
    <property type="term" value="F:coenzyme A binding"/>
    <property type="evidence" value="ECO:0000314"/>
    <property type="project" value="UniProtKB"/>
</dbReference>
<dbReference type="GO" id="GO:0042802">
    <property type="term" value="F:identical protein binding"/>
    <property type="evidence" value="ECO:0000314"/>
    <property type="project" value="UniProtKB"/>
</dbReference>
<dbReference type="GO" id="GO:0042803">
    <property type="term" value="F:protein homodimerization activity"/>
    <property type="evidence" value="ECO:0000314"/>
    <property type="project" value="UniProtKB"/>
</dbReference>
<dbReference type="GO" id="GO:1901742">
    <property type="term" value="P:2-deoxystreptamine metabolic process"/>
    <property type="evidence" value="ECO:0000314"/>
    <property type="project" value="UniProtKB"/>
</dbReference>
<dbReference type="GO" id="GO:0046356">
    <property type="term" value="P:acetyl-CoA catabolic process"/>
    <property type="evidence" value="ECO:0000314"/>
    <property type="project" value="UniProtKB"/>
</dbReference>
<dbReference type="GO" id="GO:0016999">
    <property type="term" value="P:antibiotic metabolic process"/>
    <property type="evidence" value="ECO:0000314"/>
    <property type="project" value="UniProtKB"/>
</dbReference>
<dbReference type="GO" id="GO:0071236">
    <property type="term" value="P:cellular response to antibiotic"/>
    <property type="evidence" value="ECO:0000314"/>
    <property type="project" value="UniProtKB"/>
</dbReference>
<dbReference type="InterPro" id="IPR003679">
    <property type="entry name" value="Amioglycoside_AcTrfase"/>
</dbReference>
<dbReference type="InterPro" id="IPR028345">
    <property type="entry name" value="Antibiotic_NAT-like"/>
</dbReference>
<dbReference type="NCBIfam" id="NF033082">
    <property type="entry name" value="AAC_3"/>
    <property type="match status" value="1"/>
</dbReference>
<dbReference type="PANTHER" id="PTHR11104">
    <property type="entry name" value="AMINOGLYCOSIDE N3-ACETYLTRANSFERASE"/>
    <property type="match status" value="1"/>
</dbReference>
<dbReference type="PANTHER" id="PTHR11104:SF0">
    <property type="entry name" value="SPBETA PROPHAGE-DERIVED AMINOGLYCOSIDE N(3')-ACETYLTRANSFERASE-LIKE PROTEIN YOKD"/>
    <property type="match status" value="1"/>
</dbReference>
<dbReference type="Pfam" id="PF02522">
    <property type="entry name" value="Antibiotic_NAT"/>
    <property type="match status" value="1"/>
</dbReference>
<dbReference type="SUPFAM" id="SSF110710">
    <property type="entry name" value="TTHA0583/YokD-like"/>
    <property type="match status" value="1"/>
</dbReference>
<evidence type="ECO:0000269" key="1">
    <source>
    </source>
</evidence>
<evidence type="ECO:0000269" key="2">
    <source>
    </source>
</evidence>
<evidence type="ECO:0000303" key="3">
    <source>
    </source>
</evidence>
<evidence type="ECO:0000303" key="4">
    <source>
    </source>
</evidence>
<evidence type="ECO:0000305" key="5"/>
<evidence type="ECO:0007744" key="6">
    <source>
        <dbReference type="PDB" id="7MQK"/>
    </source>
</evidence>
<evidence type="ECO:0007744" key="7">
    <source>
        <dbReference type="PDB" id="7MQL"/>
    </source>
</evidence>
<evidence type="ECO:0007744" key="8">
    <source>
        <dbReference type="PDB" id="7MQM"/>
    </source>
</evidence>
<evidence type="ECO:0007829" key="9">
    <source>
        <dbReference type="PDB" id="7MQL"/>
    </source>
</evidence>
<evidence type="ECO:0007829" key="10">
    <source>
        <dbReference type="PDB" id="7Q0Q"/>
    </source>
</evidence>
<evidence type="ECO:0007829" key="11">
    <source>
        <dbReference type="PDB" id="7Q1D"/>
    </source>
</evidence>
<reference key="1">
    <citation type="journal article" date="1991" name="Antimicrob. Agents Chemother.">
        <title>Nucleotide sequence of the aacC3 gene, a gentamicin resistance determinant encoding aminoglycoside-(3)-N-acetyltransferase III expressed in Pseudomonas aeruginosa but not in Escherichia coli.</title>
        <authorList>
            <person name="Vliegenthart J.S."/>
            <person name="Ketelaar-Van Gaalen P.A.G."/>
            <person name="van de Klundert J.A.M."/>
        </authorList>
    </citation>
    <scope>NUCLEOTIDE SEQUENCE [GENOMIC DNA]</scope>
    <scope>FUNCTION</scope>
    <scope>CATALYTIC ACTIVITY</scope>
    <scope>SUBSTRATE SPECIFICITY</scope>
    <source>
        <strain evidence="3">PST-I</strain>
    </source>
</reference>
<reference evidence="6 7 8" key="2">
    <citation type="journal article" date="2022" name="PLoS ONE">
        <title>Structural elucidation of substrate-bound aminoglycoside acetyltransferase (3)-IIIa.</title>
        <authorList>
            <person name="Zielinski M."/>
            <person name="Blanchet J."/>
            <person name="Hailemariam S."/>
            <person name="Berghuis A.M."/>
        </authorList>
    </citation>
    <scope>X-RAY CRYSTALLOGRAPHY (1.6 ANGSTROMS) IN COMPLEX WITH COENZYME A; GENTAMICIN; RIBOSTAMYCIN AND SISOMICIN</scope>
    <scope>FUNCTION</scope>
    <scope>CATALYTIC ACTIVITY</scope>
    <scope>SUBSTRATE SPECIFICITY</scope>
    <scope>BIOPHYSICOCHEMICAL PROPERTIES</scope>
    <scope>SUBUNIT</scope>
    <scope>MUTAGENESIS OF TYR-64; ASP-72; GLU-123; TYR-146 AND ASP-170</scope>
</reference>
<protein>
    <recommendedName>
        <fullName evidence="3">Aminoglycoside N(3)-acetyltransferase III</fullName>
        <ecNumber evidence="1 2">2.3.1.81</ecNumber>
    </recommendedName>
    <alternativeName>
        <fullName evidence="4">AAC(3)-IIIa</fullName>
    </alternativeName>
    <alternativeName>
        <fullName evidence="3">ACC(3)-III</fullName>
    </alternativeName>
    <alternativeName>
        <fullName>Aminocyclitol 3-N-acetyltransferase type III</fullName>
    </alternativeName>
    <alternativeName>
        <fullName evidence="4">Aminoglycoside acetyltransferase (3)-IIIa</fullName>
    </alternativeName>
    <alternativeName>
        <fullName>Gentamicin-(3)-N-acetyl-transferase</fullName>
    </alternativeName>
</protein>
<gene>
    <name evidence="3" type="primary">aacC3</name>
</gene>
<name>AACC3_PSEAI</name>
<accession>P29808</accession>
<proteinExistence type="evidence at protein level"/>
<organism>
    <name type="scientific">Pseudomonas aeruginosa</name>
    <dbReference type="NCBI Taxonomy" id="287"/>
    <lineage>
        <taxon>Bacteria</taxon>
        <taxon>Pseudomonadati</taxon>
        <taxon>Pseudomonadota</taxon>
        <taxon>Gammaproteobacteria</taxon>
        <taxon>Pseudomonadales</taxon>
        <taxon>Pseudomonadaceae</taxon>
        <taxon>Pseudomonas</taxon>
    </lineage>
</organism>
<comment type="function">
    <text evidence="1 2">Resistance to antibiotics containing the 2-deoxy-streptamine ring including dibekacin, gentamicin, kanamycin, sisomicin, tobramycin and neomycin, but not to amikacin or netilmicin (PubMed:1649572). Acetylates a broad range of both 4,5- and 4,6-disubstituted aminoglycosides, including neomycin, paromomycin, ribostamycin, sisomicin, gentamicin, tobramycin and kanamycin, with no preference of one disubstitution over the other. Acetylates sisomicin and kanamycin most and least efficiently, respectively. Does not modify plazomicin (PubMed:35921328).</text>
</comment>
<comment type="catalytic activity">
    <reaction evidence="1 2">
        <text>a 2-deoxystreptamine antibiotic + acetyl-CoA = an N(3)-acetyl-2-deoxystreptamine antibiotic + CoA + H(+)</text>
        <dbReference type="Rhea" id="RHEA:12665"/>
        <dbReference type="ChEBI" id="CHEBI:15378"/>
        <dbReference type="ChEBI" id="CHEBI:57287"/>
        <dbReference type="ChEBI" id="CHEBI:57288"/>
        <dbReference type="ChEBI" id="CHEBI:57921"/>
        <dbReference type="ChEBI" id="CHEBI:77452"/>
        <dbReference type="EC" id="2.3.1.81"/>
    </reaction>
    <physiologicalReaction direction="left-to-right" evidence="1 2">
        <dbReference type="Rhea" id="RHEA:12666"/>
    </physiologicalReaction>
</comment>
<comment type="biophysicochemical properties">
    <kinetics>
        <KM evidence="2">6.6 uM for neomycin (at pH 6.5 and 22 degrees Celsius)</KM>
        <KM evidence="2">6.7 uM for paromomycin (at pH 6.5 and 22 degrees Celsius)</KM>
        <KM evidence="2">7.9 uM for ribostamycin (at pH 6.5 and 22 degrees Celsius)</KM>
        <KM evidence="2">10.9 uM for sisomicin (at pH 6.5 and 22 degrees Celsius)</KM>
        <KM evidence="2">10.1 uM for gentamicin (at pH 6.5 and 22 degrees Celsius)</KM>
        <KM evidence="2">7 uM for kanamycin (at pH 6.5 and 22 degrees Celsius)</KM>
        <KM evidence="2">6.6 uM for tobramycin (at pH 6.5 and 22 degrees Celsius)</KM>
        <text evidence="2">kcat is 6.15 sec(-1) with neomycin as substrate. kcat is 5.52 sec(-1) with paromomycin as substrate. kcat is 5.38 sec(-1) with ribostamycin as substrate. kcat is 10.48 sec(-1) with sisomicin as substrate. kcat is 8.18 sec(-1) with gentamicin as substrate. kcat is 4.45 sec(-1) with kanamycin as substrate. kcat is 5.68 sec(-1) with tobramycin as substrate.</text>
    </kinetics>
</comment>
<comment type="subunit">
    <text evidence="2">Homodimer.</text>
</comment>
<comment type="similarity">
    <text evidence="5">Belongs to the antibiotic N-acetyltransferase family.</text>
</comment>
<sequence length="271" mass="29618">MTDLNIPHTHAHLVDAFQALGIRAGQALMLHASVKAVGAVMGGPNVILQALMDALTPDGTLMMYAGWQDIPDFIDSLPDALKAVYLEQHPPFDPATARAVRENSVLAEFLRTWPCVHRSANPEASMVAVGRQAALLTANHALDYGYGVESPLAKLVAIEGYVLMLGAPLDTITLLHHAEYLAKMRHKNVVRYPCPILRDGRKVWVTVEDYDTGDPHDDYSFEQIARDYVAQGGGTRGKVGDADAYLFAAQDLTRFAVQWLESRFGDSASYG</sequence>
<keyword id="KW-0002">3D-structure</keyword>
<keyword id="KW-0012">Acyltransferase</keyword>
<keyword id="KW-0046">Antibiotic resistance</keyword>
<keyword id="KW-0808">Transferase</keyword>